<reference key="1">
    <citation type="journal article" date="2005" name="Nat. Biotechnol.">
        <title>The complete genome sequence of the meat-borne lactic acid bacterium Lactobacillus sakei 23K.</title>
        <authorList>
            <person name="Chaillou S."/>
            <person name="Champomier-Verges M.-C."/>
            <person name="Cornet M."/>
            <person name="Crutz-Le Coq A.-M."/>
            <person name="Dudez A.-M."/>
            <person name="Martin V."/>
            <person name="Beaufils S."/>
            <person name="Darbon-Rongere E."/>
            <person name="Bossy R."/>
            <person name="Loux V."/>
            <person name="Zagorec M."/>
        </authorList>
    </citation>
    <scope>NUCLEOTIDE SEQUENCE [LARGE SCALE GENOMIC DNA]</scope>
    <source>
        <strain>23K</strain>
    </source>
</reference>
<comment type="function">
    <text evidence="1">The UvrABC repair system catalyzes the recognition and processing of DNA lesions. A damage recognition complex composed of 2 UvrA and 2 UvrB subunits scans DNA for abnormalities. Upon binding of the UvrA(2)B(2) complex to a putative damaged site, the DNA wraps around one UvrB monomer. DNA wrap is dependent on ATP binding by UvrB and probably causes local melting of the DNA helix, facilitating insertion of UvrB beta-hairpin between the DNA strands. Then UvrB probes one DNA strand for the presence of a lesion. If a lesion is found the UvrA subunits dissociate and the UvrB-DNA preincision complex is formed. This complex is subsequently bound by UvrC and the second UvrB is released. If no lesion is found, the DNA wraps around the other UvrB subunit that will check the other stand for damage.</text>
</comment>
<comment type="subunit">
    <text evidence="1">Forms a heterotetramer with UvrA during the search for lesions. Interacts with UvrC in an incision complex.</text>
</comment>
<comment type="subcellular location">
    <subcellularLocation>
        <location evidence="1">Cytoplasm</location>
    </subcellularLocation>
</comment>
<comment type="domain">
    <text evidence="1">The beta-hairpin motif is involved in DNA binding.</text>
</comment>
<comment type="similarity">
    <text evidence="1">Belongs to the UvrB family.</text>
</comment>
<sequence>MIDRQNDNLFDLVAPYEPAGDQPAAIETLTKNFEAGAKAQVLMGATGTGKTFTMSNVIKNLNKPTLIISHNKTLAGQLYAEFKQFFPNNAVEYFVSYYDYYQPEAYVPSSDTYIEKDSSINDEIDKLRHSATSSLLERNDVIVVASVSCIFGLGDPREYQNHVLSLRPGMEVERNDLLRQLVDIQFERNDIDFQRGRFRVRGDVVEIFPASRDDHALRVEFFGDEIDRIVEVDALTGEVIGERSHVAIFPATHFMTNDEKMEKAIESIKAELAERLAVLKGEGKLLEAQRLEQRTNYDLEMMQEMGYCSGIENYSRHMEDRQAGEPPYTLLDFFPKDSIMMIDESHVTMPQIRGMYNGDRARKQMLIDYGFRLPSALDNRPLTLPEFEEHVNEIMYVSATPGPYEAEQTDIQVDQIIRPTGLLDPNIEVRPIMGQIDDLVGEINDRIEKNERVFITTLTKKMSEDLTDYLKELGIKVRYLHSDIKTLERTEIIRDLRLGKFDVLIGINLLREGIDVPEVSLVAILDADKEGFLRSERSLIQTIGRASRNEHGQVLLYADKITDSMRHAIDETKRRRTIQEDYNTAHNITPKTIIKPIRDAISMVQSVEHPEEIKMTNEIDLENMSKAEKLEMVERLSEQMRLAAKKLDFEQAATLRDTILELKSEID</sequence>
<name>UVRB_LATSS</name>
<proteinExistence type="inferred from homology"/>
<evidence type="ECO:0000255" key="1">
    <source>
        <dbReference type="HAMAP-Rule" id="MF_00204"/>
    </source>
</evidence>
<organism>
    <name type="scientific">Latilactobacillus sakei subsp. sakei (strain 23K)</name>
    <name type="common">Lactobacillus sakei subsp. sakei</name>
    <dbReference type="NCBI Taxonomy" id="314315"/>
    <lineage>
        <taxon>Bacteria</taxon>
        <taxon>Bacillati</taxon>
        <taxon>Bacillota</taxon>
        <taxon>Bacilli</taxon>
        <taxon>Lactobacillales</taxon>
        <taxon>Lactobacillaceae</taxon>
        <taxon>Latilactobacillus</taxon>
    </lineage>
</organism>
<gene>
    <name evidence="1" type="primary">uvrB</name>
    <name type="ordered locus">LCA_0523</name>
</gene>
<feature type="chain" id="PRO_0000227323" description="UvrABC system protein B">
    <location>
        <begin position="1"/>
        <end position="667"/>
    </location>
</feature>
<feature type="domain" description="Helicase ATP-binding" evidence="1">
    <location>
        <begin position="31"/>
        <end position="414"/>
    </location>
</feature>
<feature type="domain" description="Helicase C-terminal" evidence="1">
    <location>
        <begin position="435"/>
        <end position="597"/>
    </location>
</feature>
<feature type="domain" description="UVR" evidence="1">
    <location>
        <begin position="630"/>
        <end position="665"/>
    </location>
</feature>
<feature type="short sequence motif" description="Beta-hairpin">
    <location>
        <begin position="97"/>
        <end position="120"/>
    </location>
</feature>
<feature type="binding site" evidence="1">
    <location>
        <begin position="44"/>
        <end position="51"/>
    </location>
    <ligand>
        <name>ATP</name>
        <dbReference type="ChEBI" id="CHEBI:30616"/>
    </ligand>
</feature>
<accession>Q38YA4</accession>
<keyword id="KW-0067">ATP-binding</keyword>
<keyword id="KW-0963">Cytoplasm</keyword>
<keyword id="KW-0227">DNA damage</keyword>
<keyword id="KW-0228">DNA excision</keyword>
<keyword id="KW-0234">DNA repair</keyword>
<keyword id="KW-0267">Excision nuclease</keyword>
<keyword id="KW-0547">Nucleotide-binding</keyword>
<keyword id="KW-1185">Reference proteome</keyword>
<keyword id="KW-0742">SOS response</keyword>
<dbReference type="EMBL" id="CR936503">
    <property type="protein sequence ID" value="CAI54823.1"/>
    <property type="molecule type" value="Genomic_DNA"/>
</dbReference>
<dbReference type="RefSeq" id="WP_011374231.1">
    <property type="nucleotide sequence ID" value="NC_007576.1"/>
</dbReference>
<dbReference type="SMR" id="Q38YA4"/>
<dbReference type="STRING" id="314315.LCA_0523"/>
<dbReference type="KEGG" id="lsa:LCA_0523"/>
<dbReference type="eggNOG" id="COG0556">
    <property type="taxonomic scope" value="Bacteria"/>
</dbReference>
<dbReference type="HOGENOM" id="CLU_009621_2_1_9"/>
<dbReference type="OrthoDB" id="9806651at2"/>
<dbReference type="Proteomes" id="UP000002707">
    <property type="component" value="Chromosome"/>
</dbReference>
<dbReference type="GO" id="GO:0005737">
    <property type="term" value="C:cytoplasm"/>
    <property type="evidence" value="ECO:0007669"/>
    <property type="project" value="UniProtKB-SubCell"/>
</dbReference>
<dbReference type="GO" id="GO:0009380">
    <property type="term" value="C:excinuclease repair complex"/>
    <property type="evidence" value="ECO:0007669"/>
    <property type="project" value="InterPro"/>
</dbReference>
<dbReference type="GO" id="GO:0005524">
    <property type="term" value="F:ATP binding"/>
    <property type="evidence" value="ECO:0007669"/>
    <property type="project" value="UniProtKB-UniRule"/>
</dbReference>
<dbReference type="GO" id="GO:0016887">
    <property type="term" value="F:ATP hydrolysis activity"/>
    <property type="evidence" value="ECO:0007669"/>
    <property type="project" value="InterPro"/>
</dbReference>
<dbReference type="GO" id="GO:0003677">
    <property type="term" value="F:DNA binding"/>
    <property type="evidence" value="ECO:0007669"/>
    <property type="project" value="UniProtKB-UniRule"/>
</dbReference>
<dbReference type="GO" id="GO:0009381">
    <property type="term" value="F:excinuclease ABC activity"/>
    <property type="evidence" value="ECO:0007669"/>
    <property type="project" value="UniProtKB-UniRule"/>
</dbReference>
<dbReference type="GO" id="GO:0006289">
    <property type="term" value="P:nucleotide-excision repair"/>
    <property type="evidence" value="ECO:0007669"/>
    <property type="project" value="UniProtKB-UniRule"/>
</dbReference>
<dbReference type="GO" id="GO:0009432">
    <property type="term" value="P:SOS response"/>
    <property type="evidence" value="ECO:0007669"/>
    <property type="project" value="UniProtKB-UniRule"/>
</dbReference>
<dbReference type="CDD" id="cd17916">
    <property type="entry name" value="DEXHc_UvrB"/>
    <property type="match status" value="1"/>
</dbReference>
<dbReference type="CDD" id="cd18790">
    <property type="entry name" value="SF2_C_UvrB"/>
    <property type="match status" value="1"/>
</dbReference>
<dbReference type="Gene3D" id="6.10.140.240">
    <property type="match status" value="1"/>
</dbReference>
<dbReference type="Gene3D" id="3.40.50.300">
    <property type="entry name" value="P-loop containing nucleotide triphosphate hydrolases"/>
    <property type="match status" value="3"/>
</dbReference>
<dbReference type="Gene3D" id="4.10.860.10">
    <property type="entry name" value="UVR domain"/>
    <property type="match status" value="1"/>
</dbReference>
<dbReference type="HAMAP" id="MF_00204">
    <property type="entry name" value="UvrB"/>
    <property type="match status" value="1"/>
</dbReference>
<dbReference type="InterPro" id="IPR006935">
    <property type="entry name" value="Helicase/UvrB_N"/>
</dbReference>
<dbReference type="InterPro" id="IPR014001">
    <property type="entry name" value="Helicase_ATP-bd"/>
</dbReference>
<dbReference type="InterPro" id="IPR001650">
    <property type="entry name" value="Helicase_C-like"/>
</dbReference>
<dbReference type="InterPro" id="IPR027417">
    <property type="entry name" value="P-loop_NTPase"/>
</dbReference>
<dbReference type="InterPro" id="IPR001943">
    <property type="entry name" value="UVR_dom"/>
</dbReference>
<dbReference type="InterPro" id="IPR036876">
    <property type="entry name" value="UVR_dom_sf"/>
</dbReference>
<dbReference type="InterPro" id="IPR004807">
    <property type="entry name" value="UvrB"/>
</dbReference>
<dbReference type="InterPro" id="IPR041471">
    <property type="entry name" value="UvrB_inter"/>
</dbReference>
<dbReference type="InterPro" id="IPR024759">
    <property type="entry name" value="UvrB_YAD/RRR_dom"/>
</dbReference>
<dbReference type="NCBIfam" id="NF003673">
    <property type="entry name" value="PRK05298.1"/>
    <property type="match status" value="1"/>
</dbReference>
<dbReference type="NCBIfam" id="TIGR00631">
    <property type="entry name" value="uvrb"/>
    <property type="match status" value="1"/>
</dbReference>
<dbReference type="PANTHER" id="PTHR24029">
    <property type="entry name" value="UVRABC SYSTEM PROTEIN B"/>
    <property type="match status" value="1"/>
</dbReference>
<dbReference type="PANTHER" id="PTHR24029:SF0">
    <property type="entry name" value="UVRABC SYSTEM PROTEIN B"/>
    <property type="match status" value="1"/>
</dbReference>
<dbReference type="Pfam" id="PF00271">
    <property type="entry name" value="Helicase_C"/>
    <property type="match status" value="1"/>
</dbReference>
<dbReference type="Pfam" id="PF04851">
    <property type="entry name" value="ResIII"/>
    <property type="match status" value="1"/>
</dbReference>
<dbReference type="Pfam" id="PF02151">
    <property type="entry name" value="UVR"/>
    <property type="match status" value="1"/>
</dbReference>
<dbReference type="Pfam" id="PF12344">
    <property type="entry name" value="UvrB"/>
    <property type="match status" value="1"/>
</dbReference>
<dbReference type="Pfam" id="PF17757">
    <property type="entry name" value="UvrB_inter"/>
    <property type="match status" value="1"/>
</dbReference>
<dbReference type="SMART" id="SM00487">
    <property type="entry name" value="DEXDc"/>
    <property type="match status" value="1"/>
</dbReference>
<dbReference type="SMART" id="SM00490">
    <property type="entry name" value="HELICc"/>
    <property type="match status" value="1"/>
</dbReference>
<dbReference type="SUPFAM" id="SSF46600">
    <property type="entry name" value="C-terminal UvrC-binding domain of UvrB"/>
    <property type="match status" value="1"/>
</dbReference>
<dbReference type="SUPFAM" id="SSF52540">
    <property type="entry name" value="P-loop containing nucleoside triphosphate hydrolases"/>
    <property type="match status" value="2"/>
</dbReference>
<dbReference type="PROSITE" id="PS51192">
    <property type="entry name" value="HELICASE_ATP_BIND_1"/>
    <property type="match status" value="1"/>
</dbReference>
<dbReference type="PROSITE" id="PS51194">
    <property type="entry name" value="HELICASE_CTER"/>
    <property type="match status" value="1"/>
</dbReference>
<dbReference type="PROSITE" id="PS50151">
    <property type="entry name" value="UVR"/>
    <property type="match status" value="1"/>
</dbReference>
<protein>
    <recommendedName>
        <fullName evidence="1">UvrABC system protein B</fullName>
        <shortName evidence="1">Protein UvrB</shortName>
    </recommendedName>
    <alternativeName>
        <fullName evidence="1">Excinuclease ABC subunit B</fullName>
    </alternativeName>
</protein>